<name>METK_STRP4</name>
<keyword id="KW-0067">ATP-binding</keyword>
<keyword id="KW-0963">Cytoplasm</keyword>
<keyword id="KW-0460">Magnesium</keyword>
<keyword id="KW-0479">Metal-binding</keyword>
<keyword id="KW-0547">Nucleotide-binding</keyword>
<keyword id="KW-0554">One-carbon metabolism</keyword>
<keyword id="KW-0630">Potassium</keyword>
<keyword id="KW-0808">Transferase</keyword>
<organism>
    <name type="scientific">Streptococcus pneumoniae serotype 19F (strain G54)</name>
    <dbReference type="NCBI Taxonomy" id="512566"/>
    <lineage>
        <taxon>Bacteria</taxon>
        <taxon>Bacillati</taxon>
        <taxon>Bacillota</taxon>
        <taxon>Bacilli</taxon>
        <taxon>Lactobacillales</taxon>
        <taxon>Streptococcaceae</taxon>
        <taxon>Streptococcus</taxon>
    </lineage>
</organism>
<sequence length="396" mass="43115">MSERKLFTSESVSEGHPDKIADQISDAILDAILAKDPEAHVAAETAVYTGSVHVFGEISTNAYVDINRVVRDTIAEIGYTNTEYGFSAETVGVHPSLVEQSPDIAQGVNEALEVRGNADQDPLDLIGAGDQGLMFGFAVDETEELMPLPIALSHKLVRRLAELRKSGEISYLRPDAKSQVTVEYDENDRPVRVDTVVISTQHDPEATNEQIHQDVIDKVIKEVIPSSYLDDKTKFFINPTGRFVIGGPQGDSGLTGRKIIVDTYGGYSRHGGGAFSGKDATKVDRSASYAARYIAKNIVAAGLAKKAEVQLAYAIGVAQPVSVRIDTFGTGTVAESQLEKAARQIFDLRPAGIIQMLDLKRPIYRQTSAYGHMGRTDIDLPWERLDKVDALKEAVK</sequence>
<protein>
    <recommendedName>
        <fullName evidence="1">S-adenosylmethionine synthase</fullName>
        <shortName evidence="1">AdoMet synthase</shortName>
        <ecNumber evidence="1">2.5.1.6</ecNumber>
    </recommendedName>
    <alternativeName>
        <fullName evidence="1">MAT</fullName>
    </alternativeName>
    <alternativeName>
        <fullName evidence="1">Methionine adenosyltransferase</fullName>
    </alternativeName>
</protein>
<proteinExistence type="inferred from homology"/>
<dbReference type="EC" id="2.5.1.6" evidence="1"/>
<dbReference type="EMBL" id="CP001015">
    <property type="protein sequence ID" value="ACF55331.1"/>
    <property type="molecule type" value="Genomic_DNA"/>
</dbReference>
<dbReference type="SMR" id="B5E364"/>
<dbReference type="KEGG" id="spx:SPG_0694"/>
<dbReference type="HOGENOM" id="CLU_041802_1_1_9"/>
<dbReference type="UniPathway" id="UPA00315">
    <property type="reaction ID" value="UER00080"/>
</dbReference>
<dbReference type="GO" id="GO:0005737">
    <property type="term" value="C:cytoplasm"/>
    <property type="evidence" value="ECO:0007669"/>
    <property type="project" value="UniProtKB-SubCell"/>
</dbReference>
<dbReference type="GO" id="GO:0005524">
    <property type="term" value="F:ATP binding"/>
    <property type="evidence" value="ECO:0007669"/>
    <property type="project" value="UniProtKB-UniRule"/>
</dbReference>
<dbReference type="GO" id="GO:0000287">
    <property type="term" value="F:magnesium ion binding"/>
    <property type="evidence" value="ECO:0007669"/>
    <property type="project" value="UniProtKB-UniRule"/>
</dbReference>
<dbReference type="GO" id="GO:0004478">
    <property type="term" value="F:methionine adenosyltransferase activity"/>
    <property type="evidence" value="ECO:0007669"/>
    <property type="project" value="UniProtKB-UniRule"/>
</dbReference>
<dbReference type="GO" id="GO:0006730">
    <property type="term" value="P:one-carbon metabolic process"/>
    <property type="evidence" value="ECO:0007669"/>
    <property type="project" value="UniProtKB-KW"/>
</dbReference>
<dbReference type="GO" id="GO:0006556">
    <property type="term" value="P:S-adenosylmethionine biosynthetic process"/>
    <property type="evidence" value="ECO:0007669"/>
    <property type="project" value="UniProtKB-UniRule"/>
</dbReference>
<dbReference type="CDD" id="cd18079">
    <property type="entry name" value="S-AdoMet_synt"/>
    <property type="match status" value="1"/>
</dbReference>
<dbReference type="FunFam" id="3.30.300.10:FF:000003">
    <property type="entry name" value="S-adenosylmethionine synthase"/>
    <property type="match status" value="1"/>
</dbReference>
<dbReference type="Gene3D" id="3.30.300.10">
    <property type="match status" value="3"/>
</dbReference>
<dbReference type="HAMAP" id="MF_00086">
    <property type="entry name" value="S_AdoMet_synth1"/>
    <property type="match status" value="1"/>
</dbReference>
<dbReference type="InterPro" id="IPR022631">
    <property type="entry name" value="ADOMET_SYNTHASE_CS"/>
</dbReference>
<dbReference type="InterPro" id="IPR022630">
    <property type="entry name" value="S-AdoMet_synt_C"/>
</dbReference>
<dbReference type="InterPro" id="IPR022629">
    <property type="entry name" value="S-AdoMet_synt_central"/>
</dbReference>
<dbReference type="InterPro" id="IPR022628">
    <property type="entry name" value="S-AdoMet_synt_N"/>
</dbReference>
<dbReference type="InterPro" id="IPR002133">
    <property type="entry name" value="S-AdoMet_synthetase"/>
</dbReference>
<dbReference type="InterPro" id="IPR022636">
    <property type="entry name" value="S-AdoMet_synthetase_sfam"/>
</dbReference>
<dbReference type="NCBIfam" id="TIGR01034">
    <property type="entry name" value="metK"/>
    <property type="match status" value="1"/>
</dbReference>
<dbReference type="PANTHER" id="PTHR11964">
    <property type="entry name" value="S-ADENOSYLMETHIONINE SYNTHETASE"/>
    <property type="match status" value="1"/>
</dbReference>
<dbReference type="Pfam" id="PF02773">
    <property type="entry name" value="S-AdoMet_synt_C"/>
    <property type="match status" value="1"/>
</dbReference>
<dbReference type="Pfam" id="PF02772">
    <property type="entry name" value="S-AdoMet_synt_M"/>
    <property type="match status" value="1"/>
</dbReference>
<dbReference type="Pfam" id="PF00438">
    <property type="entry name" value="S-AdoMet_synt_N"/>
    <property type="match status" value="1"/>
</dbReference>
<dbReference type="PIRSF" id="PIRSF000497">
    <property type="entry name" value="MAT"/>
    <property type="match status" value="1"/>
</dbReference>
<dbReference type="SUPFAM" id="SSF55973">
    <property type="entry name" value="S-adenosylmethionine synthetase"/>
    <property type="match status" value="3"/>
</dbReference>
<dbReference type="PROSITE" id="PS00376">
    <property type="entry name" value="ADOMET_SYNTHASE_1"/>
    <property type="match status" value="1"/>
</dbReference>
<dbReference type="PROSITE" id="PS00377">
    <property type="entry name" value="ADOMET_SYNTHASE_2"/>
    <property type="match status" value="1"/>
</dbReference>
<comment type="function">
    <text evidence="1">Catalyzes the formation of S-adenosylmethionine (AdoMet) from methionine and ATP. The overall synthetic reaction is composed of two sequential steps, AdoMet formation and the subsequent tripolyphosphate hydrolysis which occurs prior to release of AdoMet from the enzyme.</text>
</comment>
<comment type="catalytic activity">
    <reaction evidence="1">
        <text>L-methionine + ATP + H2O = S-adenosyl-L-methionine + phosphate + diphosphate</text>
        <dbReference type="Rhea" id="RHEA:21080"/>
        <dbReference type="ChEBI" id="CHEBI:15377"/>
        <dbReference type="ChEBI" id="CHEBI:30616"/>
        <dbReference type="ChEBI" id="CHEBI:33019"/>
        <dbReference type="ChEBI" id="CHEBI:43474"/>
        <dbReference type="ChEBI" id="CHEBI:57844"/>
        <dbReference type="ChEBI" id="CHEBI:59789"/>
        <dbReference type="EC" id="2.5.1.6"/>
    </reaction>
</comment>
<comment type="cofactor">
    <cofactor evidence="1">
        <name>Mg(2+)</name>
        <dbReference type="ChEBI" id="CHEBI:18420"/>
    </cofactor>
    <text evidence="1">Binds 2 divalent ions per subunit.</text>
</comment>
<comment type="cofactor">
    <cofactor evidence="1">
        <name>K(+)</name>
        <dbReference type="ChEBI" id="CHEBI:29103"/>
    </cofactor>
    <text evidence="1">Binds 1 potassium ion per subunit.</text>
</comment>
<comment type="pathway">
    <text evidence="1">Amino-acid biosynthesis; S-adenosyl-L-methionine biosynthesis; S-adenosyl-L-methionine from L-methionine: step 1/1.</text>
</comment>
<comment type="subunit">
    <text evidence="1">Homotetramer; dimer of dimers.</text>
</comment>
<comment type="subcellular location">
    <subcellularLocation>
        <location evidence="1">Cytoplasm</location>
    </subcellularLocation>
</comment>
<comment type="similarity">
    <text evidence="1">Belongs to the AdoMet synthase family.</text>
</comment>
<gene>
    <name evidence="1" type="primary">metK</name>
    <name type="ordered locus">SPG_0694</name>
</gene>
<accession>B5E364</accession>
<evidence type="ECO:0000255" key="1">
    <source>
        <dbReference type="HAMAP-Rule" id="MF_00086"/>
    </source>
</evidence>
<feature type="chain" id="PRO_1000093091" description="S-adenosylmethionine synthase">
    <location>
        <begin position="1"/>
        <end position="396"/>
    </location>
</feature>
<feature type="region of interest" description="Flexible loop" evidence="1">
    <location>
        <begin position="100"/>
        <end position="110"/>
    </location>
</feature>
<feature type="binding site" description="in other chain" evidence="1">
    <location>
        <position position="16"/>
    </location>
    <ligand>
        <name>ATP</name>
        <dbReference type="ChEBI" id="CHEBI:30616"/>
        <note>ligand shared between two neighboring subunits</note>
    </ligand>
</feature>
<feature type="binding site" evidence="1">
    <location>
        <position position="18"/>
    </location>
    <ligand>
        <name>Mg(2+)</name>
        <dbReference type="ChEBI" id="CHEBI:18420"/>
    </ligand>
</feature>
<feature type="binding site" evidence="1">
    <location>
        <position position="44"/>
    </location>
    <ligand>
        <name>K(+)</name>
        <dbReference type="ChEBI" id="CHEBI:29103"/>
    </ligand>
</feature>
<feature type="binding site" description="in other chain" evidence="1">
    <location>
        <position position="57"/>
    </location>
    <ligand>
        <name>L-methionine</name>
        <dbReference type="ChEBI" id="CHEBI:57844"/>
        <note>ligand shared between two neighboring subunits</note>
    </ligand>
</feature>
<feature type="binding site" description="in other chain" evidence="1">
    <location>
        <position position="100"/>
    </location>
    <ligand>
        <name>L-methionine</name>
        <dbReference type="ChEBI" id="CHEBI:57844"/>
        <note>ligand shared between two neighboring subunits</note>
    </ligand>
</feature>
<feature type="binding site" description="in other chain" evidence="1">
    <location>
        <begin position="175"/>
        <end position="177"/>
    </location>
    <ligand>
        <name>ATP</name>
        <dbReference type="ChEBI" id="CHEBI:30616"/>
        <note>ligand shared between two neighboring subunits</note>
    </ligand>
</feature>
<feature type="binding site" description="in other chain" evidence="1">
    <location>
        <begin position="242"/>
        <end position="243"/>
    </location>
    <ligand>
        <name>ATP</name>
        <dbReference type="ChEBI" id="CHEBI:30616"/>
        <note>ligand shared between two neighboring subunits</note>
    </ligand>
</feature>
<feature type="binding site" evidence="1">
    <location>
        <position position="251"/>
    </location>
    <ligand>
        <name>ATP</name>
        <dbReference type="ChEBI" id="CHEBI:30616"/>
        <note>ligand shared between two neighboring subunits</note>
    </ligand>
</feature>
<feature type="binding site" evidence="1">
    <location>
        <position position="251"/>
    </location>
    <ligand>
        <name>L-methionine</name>
        <dbReference type="ChEBI" id="CHEBI:57844"/>
        <note>ligand shared between two neighboring subunits</note>
    </ligand>
</feature>
<feature type="binding site" description="in other chain" evidence="1">
    <location>
        <begin position="257"/>
        <end position="258"/>
    </location>
    <ligand>
        <name>ATP</name>
        <dbReference type="ChEBI" id="CHEBI:30616"/>
        <note>ligand shared between two neighboring subunits</note>
    </ligand>
</feature>
<feature type="binding site" evidence="1">
    <location>
        <position position="274"/>
    </location>
    <ligand>
        <name>ATP</name>
        <dbReference type="ChEBI" id="CHEBI:30616"/>
        <note>ligand shared between two neighboring subunits</note>
    </ligand>
</feature>
<feature type="binding site" evidence="1">
    <location>
        <position position="278"/>
    </location>
    <ligand>
        <name>ATP</name>
        <dbReference type="ChEBI" id="CHEBI:30616"/>
        <note>ligand shared between two neighboring subunits</note>
    </ligand>
</feature>
<feature type="binding site" description="in other chain" evidence="1">
    <location>
        <position position="282"/>
    </location>
    <ligand>
        <name>L-methionine</name>
        <dbReference type="ChEBI" id="CHEBI:57844"/>
        <note>ligand shared between two neighboring subunits</note>
    </ligand>
</feature>
<reference key="1">
    <citation type="journal article" date="2001" name="Microb. Drug Resist.">
        <title>Annotated draft genomic sequence from a Streptococcus pneumoniae type 19F clinical isolate.</title>
        <authorList>
            <person name="Dopazo J."/>
            <person name="Mendoza A."/>
            <person name="Herrero J."/>
            <person name="Caldara F."/>
            <person name="Humbert Y."/>
            <person name="Friedli L."/>
            <person name="Guerrier M."/>
            <person name="Grand-Schenk E."/>
            <person name="Gandin C."/>
            <person name="de Francesco M."/>
            <person name="Polissi A."/>
            <person name="Buell G."/>
            <person name="Feger G."/>
            <person name="Garcia E."/>
            <person name="Peitsch M."/>
            <person name="Garcia-Bustos J.F."/>
        </authorList>
    </citation>
    <scope>NUCLEOTIDE SEQUENCE [LARGE SCALE GENOMIC DNA]</scope>
    <source>
        <strain>G54</strain>
    </source>
</reference>
<reference key="2">
    <citation type="submission" date="2008-03" db="EMBL/GenBank/DDBJ databases">
        <title>Pneumococcal beta glucoside metabolism investigated by whole genome comparison.</title>
        <authorList>
            <person name="Mulas L."/>
            <person name="Trappetti C."/>
            <person name="Hakenbeck R."/>
            <person name="Iannelli F."/>
            <person name="Pozzi G."/>
            <person name="Davidsen T.M."/>
            <person name="Tettelin H."/>
            <person name="Oggioni M."/>
        </authorList>
    </citation>
    <scope>NUCLEOTIDE SEQUENCE [LARGE SCALE GENOMIC DNA]</scope>
    <source>
        <strain>G54</strain>
    </source>
</reference>